<proteinExistence type="inferred from homology"/>
<protein>
    <recommendedName>
        <fullName evidence="1">Sulfate adenylyltransferase subunit 2</fullName>
        <ecNumber evidence="1">2.7.7.4</ecNumber>
    </recommendedName>
    <alternativeName>
        <fullName evidence="1">ATP-sulfurylase small subunit</fullName>
    </alternativeName>
    <alternativeName>
        <fullName evidence="1">Sulfate adenylate transferase</fullName>
        <shortName evidence="1">SAT</shortName>
    </alternativeName>
</protein>
<sequence length="302" mass="35474">MEQKHLTHLQQLEAESIHILREVVAEFRNPVMMYSIGKDSSVMLHLARKAFYPGKLPFPLLHVDTGWKFREMYHFRDHTAKAYGFELLVHKNLEGQAMGINPFVHGSAKHTNIMKTESLKQAMNKYNFDAAFGGARRDEEKSRAKERIYSFRDRFHRWDPKNQRPELWHNYNGQINQGESIRVFPLSNWTEIEIWQYIFLENIDIVPLYFAKERPILERNGMLIMIDDDRIDLQFGETVGQRMVRFRTLGCWPLTGAVESTAQTLPDIIKEMLISATSERQGRVIDTDQSSSMEMKKRQGYF</sequence>
<keyword id="KW-0067">ATP-binding</keyword>
<keyword id="KW-0547">Nucleotide-binding</keyword>
<keyword id="KW-0548">Nucleotidyltransferase</keyword>
<keyword id="KW-1185">Reference proteome</keyword>
<keyword id="KW-0808">Transferase</keyword>
<gene>
    <name evidence="1" type="primary">cysD</name>
    <name type="ordered locus">BCI_0214</name>
</gene>
<organism>
    <name type="scientific">Baumannia cicadellinicola subsp. Homalodisca coagulata</name>
    <dbReference type="NCBI Taxonomy" id="374463"/>
    <lineage>
        <taxon>Bacteria</taxon>
        <taxon>Pseudomonadati</taxon>
        <taxon>Pseudomonadota</taxon>
        <taxon>Gammaproteobacteria</taxon>
        <taxon>Candidatus Palibaumannia</taxon>
    </lineage>
</organism>
<reference key="1">
    <citation type="journal article" date="2006" name="PLoS Biol.">
        <title>Metabolic complementarity and genomics of the dual bacterial symbiosis of sharpshooters.</title>
        <authorList>
            <person name="Wu D."/>
            <person name="Daugherty S.C."/>
            <person name="Van Aken S.E."/>
            <person name="Pai G.H."/>
            <person name="Watkins K.L."/>
            <person name="Khouri H."/>
            <person name="Tallon L.J."/>
            <person name="Zaborsky J.M."/>
            <person name="Dunbar H.E."/>
            <person name="Tran P.L."/>
            <person name="Moran N.A."/>
            <person name="Eisen J.A."/>
        </authorList>
    </citation>
    <scope>NUCLEOTIDE SEQUENCE [LARGE SCALE GENOMIC DNA]</scope>
</reference>
<evidence type="ECO:0000255" key="1">
    <source>
        <dbReference type="HAMAP-Rule" id="MF_00064"/>
    </source>
</evidence>
<dbReference type="EC" id="2.7.7.4" evidence="1"/>
<dbReference type="EMBL" id="CP000238">
    <property type="protein sequence ID" value="ABF14236.1"/>
    <property type="molecule type" value="Genomic_DNA"/>
</dbReference>
<dbReference type="RefSeq" id="WP_011520402.1">
    <property type="nucleotide sequence ID" value="NC_007984.1"/>
</dbReference>
<dbReference type="SMR" id="Q1LTP5"/>
<dbReference type="STRING" id="374463.BCI_0214"/>
<dbReference type="KEGG" id="bci:BCI_0214"/>
<dbReference type="HOGENOM" id="CLU_043026_0_0_6"/>
<dbReference type="OrthoDB" id="9772604at2"/>
<dbReference type="UniPathway" id="UPA00140">
    <property type="reaction ID" value="UER00204"/>
</dbReference>
<dbReference type="Proteomes" id="UP000002427">
    <property type="component" value="Chromosome"/>
</dbReference>
<dbReference type="GO" id="GO:0005524">
    <property type="term" value="F:ATP binding"/>
    <property type="evidence" value="ECO:0007669"/>
    <property type="project" value="UniProtKB-KW"/>
</dbReference>
<dbReference type="GO" id="GO:0004781">
    <property type="term" value="F:sulfate adenylyltransferase (ATP) activity"/>
    <property type="evidence" value="ECO:0007669"/>
    <property type="project" value="UniProtKB-UniRule"/>
</dbReference>
<dbReference type="GO" id="GO:0070814">
    <property type="term" value="P:hydrogen sulfide biosynthetic process"/>
    <property type="evidence" value="ECO:0007669"/>
    <property type="project" value="UniProtKB-UniRule"/>
</dbReference>
<dbReference type="GO" id="GO:0000103">
    <property type="term" value="P:sulfate assimilation"/>
    <property type="evidence" value="ECO:0007669"/>
    <property type="project" value="UniProtKB-UniRule"/>
</dbReference>
<dbReference type="CDD" id="cd23946">
    <property type="entry name" value="Sulfate_adenylyltransferase_2"/>
    <property type="match status" value="1"/>
</dbReference>
<dbReference type="FunFam" id="3.40.50.620:FF:000002">
    <property type="entry name" value="Sulfate adenylyltransferase subunit 2"/>
    <property type="match status" value="1"/>
</dbReference>
<dbReference type="Gene3D" id="3.40.50.620">
    <property type="entry name" value="HUPs"/>
    <property type="match status" value="1"/>
</dbReference>
<dbReference type="HAMAP" id="MF_00064">
    <property type="entry name" value="Sulf_adenylyltr_sub2"/>
    <property type="match status" value="1"/>
</dbReference>
<dbReference type="InterPro" id="IPR002500">
    <property type="entry name" value="PAPS_reduct_dom"/>
</dbReference>
<dbReference type="InterPro" id="IPR014729">
    <property type="entry name" value="Rossmann-like_a/b/a_fold"/>
</dbReference>
<dbReference type="InterPro" id="IPR011784">
    <property type="entry name" value="SO4_adenylTrfase_ssu"/>
</dbReference>
<dbReference type="InterPro" id="IPR050128">
    <property type="entry name" value="Sulfate_adenylyltrnsfr_sub2"/>
</dbReference>
<dbReference type="NCBIfam" id="TIGR02039">
    <property type="entry name" value="CysD"/>
    <property type="match status" value="1"/>
</dbReference>
<dbReference type="NCBIfam" id="NF003587">
    <property type="entry name" value="PRK05253.1"/>
    <property type="match status" value="1"/>
</dbReference>
<dbReference type="NCBIfam" id="NF009214">
    <property type="entry name" value="PRK12563.1"/>
    <property type="match status" value="1"/>
</dbReference>
<dbReference type="PANTHER" id="PTHR43196">
    <property type="entry name" value="SULFATE ADENYLYLTRANSFERASE SUBUNIT 2"/>
    <property type="match status" value="1"/>
</dbReference>
<dbReference type="PANTHER" id="PTHR43196:SF1">
    <property type="entry name" value="SULFATE ADENYLYLTRANSFERASE SUBUNIT 2"/>
    <property type="match status" value="1"/>
</dbReference>
<dbReference type="Pfam" id="PF01507">
    <property type="entry name" value="PAPS_reduct"/>
    <property type="match status" value="1"/>
</dbReference>
<dbReference type="PIRSF" id="PIRSF002936">
    <property type="entry name" value="CysDAde_trans"/>
    <property type="match status" value="1"/>
</dbReference>
<dbReference type="SUPFAM" id="SSF52402">
    <property type="entry name" value="Adenine nucleotide alpha hydrolases-like"/>
    <property type="match status" value="1"/>
</dbReference>
<name>CYSD_BAUCH</name>
<comment type="function">
    <text evidence="1">With CysN forms the ATP sulfurylase (ATPS) that catalyzes the adenylation of sulfate producing adenosine 5'-phosphosulfate (APS) and diphosphate, the first enzymatic step in sulfur assimilation pathway. APS synthesis involves the formation of a high-energy phosphoric-sulfuric acid anhydride bond driven by GTP hydrolysis by CysN coupled to ATP hydrolysis by CysD.</text>
</comment>
<comment type="catalytic activity">
    <reaction evidence="1">
        <text>sulfate + ATP + H(+) = adenosine 5'-phosphosulfate + diphosphate</text>
        <dbReference type="Rhea" id="RHEA:18133"/>
        <dbReference type="ChEBI" id="CHEBI:15378"/>
        <dbReference type="ChEBI" id="CHEBI:16189"/>
        <dbReference type="ChEBI" id="CHEBI:30616"/>
        <dbReference type="ChEBI" id="CHEBI:33019"/>
        <dbReference type="ChEBI" id="CHEBI:58243"/>
        <dbReference type="EC" id="2.7.7.4"/>
    </reaction>
</comment>
<comment type="pathway">
    <text evidence="1">Sulfur metabolism; hydrogen sulfide biosynthesis; sulfite from sulfate: step 1/3.</text>
</comment>
<comment type="subunit">
    <text evidence="1">Heterodimer composed of CysD, the smaller subunit, and CysN.</text>
</comment>
<comment type="similarity">
    <text evidence="1">Belongs to the PAPS reductase family. CysD subfamily.</text>
</comment>
<accession>Q1LTP5</accession>
<feature type="chain" id="PRO_1000008952" description="Sulfate adenylyltransferase subunit 2">
    <location>
        <begin position="1"/>
        <end position="302"/>
    </location>
</feature>